<keyword id="KW-0678">Repressor</keyword>
<keyword id="KW-0346">Stress response</keyword>
<keyword id="KW-0804">Transcription</keyword>
<keyword id="KW-0805">Transcription regulation</keyword>
<reference key="1">
    <citation type="submission" date="2008-10" db="EMBL/GenBank/DDBJ databases">
        <title>Complete sequence of Desulfovibrio vulgaris str. 'Miyazaki F'.</title>
        <authorList>
            <person name="Lucas S."/>
            <person name="Copeland A."/>
            <person name="Lapidus A."/>
            <person name="Glavina del Rio T."/>
            <person name="Dalin E."/>
            <person name="Tice H."/>
            <person name="Bruce D."/>
            <person name="Goodwin L."/>
            <person name="Pitluck S."/>
            <person name="Sims D."/>
            <person name="Brettin T."/>
            <person name="Detter J.C."/>
            <person name="Han C."/>
            <person name="Larimer F."/>
            <person name="Land M."/>
            <person name="Hauser L."/>
            <person name="Kyrpides N."/>
            <person name="Mikhailova N."/>
            <person name="Hazen T.C."/>
            <person name="Richardson P."/>
        </authorList>
    </citation>
    <scope>NUCLEOTIDE SEQUENCE [LARGE SCALE GENOMIC DNA]</scope>
    <source>
        <strain>DSM 19637 / Miyazaki F</strain>
    </source>
</reference>
<dbReference type="EMBL" id="CP001197">
    <property type="protein sequence ID" value="ACL08147.1"/>
    <property type="molecule type" value="Genomic_DNA"/>
</dbReference>
<dbReference type="SMR" id="B8DKI5"/>
<dbReference type="STRING" id="883.DvMF_1195"/>
<dbReference type="KEGG" id="dvm:DvMF_1195"/>
<dbReference type="eggNOG" id="COG1420">
    <property type="taxonomic scope" value="Bacteria"/>
</dbReference>
<dbReference type="HOGENOM" id="CLU_050019_1_0_7"/>
<dbReference type="OrthoDB" id="9783139at2"/>
<dbReference type="GO" id="GO:0003677">
    <property type="term" value="F:DNA binding"/>
    <property type="evidence" value="ECO:0007669"/>
    <property type="project" value="InterPro"/>
</dbReference>
<dbReference type="GO" id="GO:0045892">
    <property type="term" value="P:negative regulation of DNA-templated transcription"/>
    <property type="evidence" value="ECO:0007669"/>
    <property type="project" value="UniProtKB-UniRule"/>
</dbReference>
<dbReference type="Gene3D" id="3.30.450.40">
    <property type="match status" value="1"/>
</dbReference>
<dbReference type="Gene3D" id="3.30.390.60">
    <property type="entry name" value="Heat-inducible transcription repressor hrca homolog, domain 3"/>
    <property type="match status" value="1"/>
</dbReference>
<dbReference type="Gene3D" id="1.10.10.10">
    <property type="entry name" value="Winged helix-like DNA-binding domain superfamily/Winged helix DNA-binding domain"/>
    <property type="match status" value="1"/>
</dbReference>
<dbReference type="HAMAP" id="MF_00081">
    <property type="entry name" value="HrcA"/>
    <property type="match status" value="1"/>
</dbReference>
<dbReference type="InterPro" id="IPR029016">
    <property type="entry name" value="GAF-like_dom_sf"/>
</dbReference>
<dbReference type="InterPro" id="IPR002571">
    <property type="entry name" value="HrcA"/>
</dbReference>
<dbReference type="InterPro" id="IPR021153">
    <property type="entry name" value="HrcA_C"/>
</dbReference>
<dbReference type="InterPro" id="IPR036388">
    <property type="entry name" value="WH-like_DNA-bd_sf"/>
</dbReference>
<dbReference type="InterPro" id="IPR036390">
    <property type="entry name" value="WH_DNA-bd_sf"/>
</dbReference>
<dbReference type="InterPro" id="IPR023120">
    <property type="entry name" value="WHTH_transcript_rep_HrcA_IDD"/>
</dbReference>
<dbReference type="NCBIfam" id="TIGR00331">
    <property type="entry name" value="hrcA"/>
    <property type="match status" value="1"/>
</dbReference>
<dbReference type="PANTHER" id="PTHR34824">
    <property type="entry name" value="HEAT-INDUCIBLE TRANSCRIPTION REPRESSOR HRCA"/>
    <property type="match status" value="1"/>
</dbReference>
<dbReference type="PANTHER" id="PTHR34824:SF1">
    <property type="entry name" value="HEAT-INDUCIBLE TRANSCRIPTION REPRESSOR HRCA"/>
    <property type="match status" value="1"/>
</dbReference>
<dbReference type="Pfam" id="PF01628">
    <property type="entry name" value="HrcA"/>
    <property type="match status" value="1"/>
</dbReference>
<dbReference type="PIRSF" id="PIRSF005485">
    <property type="entry name" value="HrcA"/>
    <property type="match status" value="1"/>
</dbReference>
<dbReference type="SUPFAM" id="SSF55781">
    <property type="entry name" value="GAF domain-like"/>
    <property type="match status" value="1"/>
</dbReference>
<dbReference type="SUPFAM" id="SSF46785">
    <property type="entry name" value="Winged helix' DNA-binding domain"/>
    <property type="match status" value="1"/>
</dbReference>
<feature type="chain" id="PRO_1000117110" description="Heat-inducible transcription repressor HrcA">
    <location>
        <begin position="1"/>
        <end position="355"/>
    </location>
</feature>
<comment type="function">
    <text evidence="1">Negative regulator of class I heat shock genes (grpE-dnaK-dnaJ and groELS operons). Prevents heat-shock induction of these operons.</text>
</comment>
<comment type="similarity">
    <text evidence="1">Belongs to the HrcA family.</text>
</comment>
<gene>
    <name evidence="1" type="primary">hrcA</name>
    <name type="ordered locus">DvMF_1195</name>
</gene>
<organism>
    <name type="scientific">Nitratidesulfovibrio vulgaris (strain DSM 19637 / Miyazaki F)</name>
    <name type="common">Desulfovibrio vulgaris</name>
    <dbReference type="NCBI Taxonomy" id="883"/>
    <lineage>
        <taxon>Bacteria</taxon>
        <taxon>Pseudomonadati</taxon>
        <taxon>Thermodesulfobacteriota</taxon>
        <taxon>Desulfovibrionia</taxon>
        <taxon>Desulfovibrionales</taxon>
        <taxon>Desulfovibrionaceae</taxon>
        <taxon>Nitratidesulfovibrio</taxon>
    </lineage>
</organism>
<sequence>MPSLGQRETQVLATIIESYIASASPVGSRAVAEHSGLHLSPASMRATMSDLTDLGYLEQPHTSAGRVPTARAFRLYVDSLLRPLPLGSAERDAIADELSRQELEISGILRRAANLLSGHARQLGMVVAPSEDEARWRSIEFAPAAEGLVLAVLMLEGGLVRTRTVRVDERYGQDELVRFGNYLNEHFRGLSLSEARDRIGHELARAGSRLEEMCVRALALSRRAVEHMGDDRELIVNGTLNMLDHAEFTDVGRMRDLLAAIEERSRLLELLDRTLSERDVRITFCQDVADGAPDGLRGCSVISAAYGGDTPRGVVSVVGPLRMDYAKIVPVVQCVSRALTQLFRERFAAAPCRLP</sequence>
<name>HRCA_NITV9</name>
<proteinExistence type="inferred from homology"/>
<accession>B8DKI5</accession>
<protein>
    <recommendedName>
        <fullName evidence="1">Heat-inducible transcription repressor HrcA</fullName>
    </recommendedName>
</protein>
<evidence type="ECO:0000255" key="1">
    <source>
        <dbReference type="HAMAP-Rule" id="MF_00081"/>
    </source>
</evidence>